<evidence type="ECO:0000250" key="1">
    <source>
        <dbReference type="UniProtKB" id="P02008"/>
    </source>
</evidence>
<evidence type="ECO:0000255" key="2">
    <source>
        <dbReference type="PROSITE-ProRule" id="PRU00238"/>
    </source>
</evidence>
<evidence type="ECO:0000269" key="3">
    <source>
    </source>
</evidence>
<dbReference type="PIR" id="A02338">
    <property type="entry name" value="HZPG"/>
</dbReference>
<dbReference type="SMR" id="P02009"/>
<dbReference type="FunCoup" id="P02009">
    <property type="interactions" value="31"/>
</dbReference>
<dbReference type="STRING" id="9823.ENSSSCP00000008514"/>
<dbReference type="iPTMnet" id="P02009"/>
<dbReference type="PaxDb" id="9823-ENSSSCP00000008514"/>
<dbReference type="PeptideAtlas" id="P02009"/>
<dbReference type="eggNOG" id="KOG3378">
    <property type="taxonomic scope" value="Eukaryota"/>
</dbReference>
<dbReference type="InParanoid" id="P02009"/>
<dbReference type="Proteomes" id="UP000008227">
    <property type="component" value="Unplaced"/>
</dbReference>
<dbReference type="Proteomes" id="UP000314985">
    <property type="component" value="Unplaced"/>
</dbReference>
<dbReference type="Proteomes" id="UP000694570">
    <property type="component" value="Unplaced"/>
</dbReference>
<dbReference type="Proteomes" id="UP000694571">
    <property type="component" value="Unplaced"/>
</dbReference>
<dbReference type="Proteomes" id="UP000694720">
    <property type="component" value="Unplaced"/>
</dbReference>
<dbReference type="Proteomes" id="UP000694722">
    <property type="component" value="Unplaced"/>
</dbReference>
<dbReference type="Proteomes" id="UP000694723">
    <property type="component" value="Unplaced"/>
</dbReference>
<dbReference type="Proteomes" id="UP000694724">
    <property type="component" value="Unplaced"/>
</dbReference>
<dbReference type="Proteomes" id="UP000694725">
    <property type="component" value="Unplaced"/>
</dbReference>
<dbReference type="Proteomes" id="UP000694726">
    <property type="component" value="Unplaced"/>
</dbReference>
<dbReference type="Proteomes" id="UP000694727">
    <property type="component" value="Unplaced"/>
</dbReference>
<dbReference type="Proteomes" id="UP000694728">
    <property type="component" value="Unplaced"/>
</dbReference>
<dbReference type="GO" id="GO:0031838">
    <property type="term" value="C:haptoglobin-hemoglobin complex"/>
    <property type="evidence" value="ECO:0000318"/>
    <property type="project" value="GO_Central"/>
</dbReference>
<dbReference type="GO" id="GO:0005833">
    <property type="term" value="C:hemoglobin complex"/>
    <property type="evidence" value="ECO:0000318"/>
    <property type="project" value="GO_Central"/>
</dbReference>
<dbReference type="GO" id="GO:0020037">
    <property type="term" value="F:heme binding"/>
    <property type="evidence" value="ECO:0000318"/>
    <property type="project" value="GO_Central"/>
</dbReference>
<dbReference type="GO" id="GO:0005506">
    <property type="term" value="F:iron ion binding"/>
    <property type="evidence" value="ECO:0007669"/>
    <property type="project" value="InterPro"/>
</dbReference>
<dbReference type="GO" id="GO:0019825">
    <property type="term" value="F:oxygen binding"/>
    <property type="evidence" value="ECO:0000318"/>
    <property type="project" value="GO_Central"/>
</dbReference>
<dbReference type="GO" id="GO:0005344">
    <property type="term" value="F:oxygen carrier activity"/>
    <property type="evidence" value="ECO:0000318"/>
    <property type="project" value="GO_Central"/>
</dbReference>
<dbReference type="GO" id="GO:0098869">
    <property type="term" value="P:cellular oxidant detoxification"/>
    <property type="evidence" value="ECO:0007669"/>
    <property type="project" value="GOC"/>
</dbReference>
<dbReference type="GO" id="GO:0042744">
    <property type="term" value="P:hydrogen peroxide catabolic process"/>
    <property type="evidence" value="ECO:0000318"/>
    <property type="project" value="GO_Central"/>
</dbReference>
<dbReference type="CDD" id="cd08927">
    <property type="entry name" value="Hb-alpha-like"/>
    <property type="match status" value="1"/>
</dbReference>
<dbReference type="FunFam" id="1.10.490.10:FF:000002">
    <property type="entry name" value="Hemoglobin subunit alpha"/>
    <property type="match status" value="1"/>
</dbReference>
<dbReference type="Gene3D" id="1.10.490.10">
    <property type="entry name" value="Globins"/>
    <property type="match status" value="1"/>
</dbReference>
<dbReference type="InterPro" id="IPR000971">
    <property type="entry name" value="Globin"/>
</dbReference>
<dbReference type="InterPro" id="IPR009050">
    <property type="entry name" value="Globin-like_sf"/>
</dbReference>
<dbReference type="InterPro" id="IPR012292">
    <property type="entry name" value="Globin/Proto"/>
</dbReference>
<dbReference type="InterPro" id="IPR002338">
    <property type="entry name" value="Hemoglobin_a-typ"/>
</dbReference>
<dbReference type="InterPro" id="IPR050056">
    <property type="entry name" value="Hemoglobin_oxygen_transport"/>
</dbReference>
<dbReference type="InterPro" id="IPR002340">
    <property type="entry name" value="Hemoglobin_zeta"/>
</dbReference>
<dbReference type="PANTHER" id="PTHR11442">
    <property type="entry name" value="HEMOGLOBIN FAMILY MEMBER"/>
    <property type="match status" value="1"/>
</dbReference>
<dbReference type="PANTHER" id="PTHR11442:SF41">
    <property type="entry name" value="HEMOGLOBIN SUBUNIT ZETA"/>
    <property type="match status" value="1"/>
</dbReference>
<dbReference type="Pfam" id="PF00042">
    <property type="entry name" value="Globin"/>
    <property type="match status" value="1"/>
</dbReference>
<dbReference type="PRINTS" id="PR00612">
    <property type="entry name" value="ALPHAHAEM"/>
</dbReference>
<dbReference type="PRINTS" id="PR00816">
    <property type="entry name" value="ZETAHAEM"/>
</dbReference>
<dbReference type="SUPFAM" id="SSF46458">
    <property type="entry name" value="Globin-like"/>
    <property type="match status" value="1"/>
</dbReference>
<dbReference type="PROSITE" id="PS01033">
    <property type="entry name" value="GLOBIN"/>
    <property type="match status" value="1"/>
</dbReference>
<proteinExistence type="evidence at protein level"/>
<feature type="chain" id="PRO_0000052855" description="Hemoglobin subunit zeta">
    <location>
        <begin position="1"/>
        <end position="141"/>
    </location>
</feature>
<feature type="domain" description="Globin" evidence="2">
    <location>
        <begin position="1"/>
        <end position="141"/>
    </location>
</feature>
<feature type="binding site" description="distal binding residue">
    <location>
        <position position="58"/>
    </location>
    <ligand>
        <name>heme b</name>
        <dbReference type="ChEBI" id="CHEBI:60344"/>
    </ligand>
    <ligandPart>
        <name>Fe</name>
        <dbReference type="ChEBI" id="CHEBI:18248"/>
    </ligandPart>
</feature>
<feature type="binding site" description="proximal binding residue">
    <location>
        <position position="87"/>
    </location>
    <ligand>
        <name>heme b</name>
        <dbReference type="ChEBI" id="CHEBI:60344"/>
    </ligand>
    <ligandPart>
        <name>Fe</name>
        <dbReference type="ChEBI" id="CHEBI:18248"/>
    </ligandPart>
</feature>
<feature type="modified residue" description="N-acetylserine" evidence="3">
    <location>
        <position position="1"/>
    </location>
</feature>
<feature type="modified residue" description="Phosphothreonine" evidence="1">
    <location>
        <position position="28"/>
    </location>
</feature>
<feature type="modified residue" description="Phosphoserine" evidence="1">
    <location>
        <position position="52"/>
    </location>
</feature>
<feature type="modified residue" description="Phosphoserine" evidence="1">
    <location>
        <position position="72"/>
    </location>
</feature>
<accession>P02009</accession>
<sequence length="141" mass="15403">SLTKAERTIIGSMWTKISSQADTIGTETLERLFASYPQAKTYFPHFDLNPGSAQLRAHGSKVLAAVGEAVKSIDNVSAALAKLSELHAYVLRVDPVNFKFLSHCLLVTLASHFPADLTAEAHAAWDKFLTIVSGVLTEKYR</sequence>
<reference key="1">
    <citation type="journal article" date="1984" name="Hoppe-Seyler's Z. Physiol. Chem.">
        <title>Pre- and perinatal oxygen transport in mammals: the embryonic hemoglobins of the domestic pig (Sus scrofa domestica).</title>
        <authorList>
            <person name="Bieber F.A."/>
            <person name="Braunitzer G."/>
        </authorList>
    </citation>
    <scope>PROTEIN SEQUENCE</scope>
    <scope>ACETYLATION AT SER-1</scope>
    <scope>FUNCTION</scope>
    <scope>SUBUNIT</scope>
</reference>
<name>HBAZ_PIG</name>
<keyword id="KW-0007">Acetylation</keyword>
<keyword id="KW-0903">Direct protein sequencing</keyword>
<keyword id="KW-0349">Heme</keyword>
<keyword id="KW-0408">Iron</keyword>
<keyword id="KW-0479">Metal-binding</keyword>
<keyword id="KW-0561">Oxygen transport</keyword>
<keyword id="KW-0597">Phosphoprotein</keyword>
<keyword id="KW-1185">Reference proteome</keyword>
<keyword id="KW-0813">Transport</keyword>
<protein>
    <recommendedName>
        <fullName>Hemoglobin subunit zeta</fullName>
    </recommendedName>
    <alternativeName>
        <fullName>Hemoglobin zeta chain</fullName>
    </alternativeName>
    <alternativeName>
        <fullName>Zeta-globin</fullName>
    </alternativeName>
</protein>
<comment type="function">
    <text evidence="3">The zeta chain is an alpha-type chain of mammalian embryonic hemoglobin.</text>
</comment>
<comment type="subunit">
    <text evidence="3">Heterotetramer of two zeta chains and two epsilon chains.</text>
</comment>
<comment type="similarity">
    <text evidence="2">Belongs to the globin family.</text>
</comment>
<organism>
    <name type="scientific">Sus scrofa</name>
    <name type="common">Pig</name>
    <dbReference type="NCBI Taxonomy" id="9823"/>
    <lineage>
        <taxon>Eukaryota</taxon>
        <taxon>Metazoa</taxon>
        <taxon>Chordata</taxon>
        <taxon>Craniata</taxon>
        <taxon>Vertebrata</taxon>
        <taxon>Euteleostomi</taxon>
        <taxon>Mammalia</taxon>
        <taxon>Eutheria</taxon>
        <taxon>Laurasiatheria</taxon>
        <taxon>Artiodactyla</taxon>
        <taxon>Suina</taxon>
        <taxon>Suidae</taxon>
        <taxon>Sus</taxon>
    </lineage>
</organism>